<comment type="function">
    <text evidence="1">Transfers the 4'-phosphopantetheine moiety from coenzyme A to a Ser of acyl-carrier-protein.</text>
</comment>
<comment type="catalytic activity">
    <reaction evidence="1">
        <text>apo-[ACP] + CoA = holo-[ACP] + adenosine 3',5'-bisphosphate + H(+)</text>
        <dbReference type="Rhea" id="RHEA:12068"/>
        <dbReference type="Rhea" id="RHEA-COMP:9685"/>
        <dbReference type="Rhea" id="RHEA-COMP:9690"/>
        <dbReference type="ChEBI" id="CHEBI:15378"/>
        <dbReference type="ChEBI" id="CHEBI:29999"/>
        <dbReference type="ChEBI" id="CHEBI:57287"/>
        <dbReference type="ChEBI" id="CHEBI:58343"/>
        <dbReference type="ChEBI" id="CHEBI:64479"/>
        <dbReference type="EC" id="2.7.8.7"/>
    </reaction>
</comment>
<comment type="cofactor">
    <cofactor evidence="1">
        <name>Mg(2+)</name>
        <dbReference type="ChEBI" id="CHEBI:18420"/>
    </cofactor>
</comment>
<comment type="subcellular location">
    <subcellularLocation>
        <location evidence="1">Cytoplasm</location>
    </subcellularLocation>
</comment>
<comment type="similarity">
    <text evidence="1">Belongs to the P-Pant transferase superfamily. AcpS family.</text>
</comment>
<protein>
    <recommendedName>
        <fullName evidence="1">Holo-[acyl-carrier-protein] synthase</fullName>
        <shortName evidence="1">Holo-ACP synthase</shortName>
        <ecNumber evidence="1">2.7.8.7</ecNumber>
    </recommendedName>
    <alternativeName>
        <fullName evidence="1">4'-phosphopantetheinyl transferase AcpS</fullName>
    </alternativeName>
</protein>
<reference key="1">
    <citation type="submission" date="2007-02" db="EMBL/GenBank/DDBJ databases">
        <title>Complete sequence of Mycobacterium sp. JLS.</title>
        <authorList>
            <consortium name="US DOE Joint Genome Institute"/>
            <person name="Copeland A."/>
            <person name="Lucas S."/>
            <person name="Lapidus A."/>
            <person name="Barry K."/>
            <person name="Detter J.C."/>
            <person name="Glavina del Rio T."/>
            <person name="Hammon N."/>
            <person name="Israni S."/>
            <person name="Dalin E."/>
            <person name="Tice H."/>
            <person name="Pitluck S."/>
            <person name="Chain P."/>
            <person name="Malfatti S."/>
            <person name="Shin M."/>
            <person name="Vergez L."/>
            <person name="Schmutz J."/>
            <person name="Larimer F."/>
            <person name="Land M."/>
            <person name="Hauser L."/>
            <person name="Kyrpides N."/>
            <person name="Mikhailova N."/>
            <person name="Miller C.D."/>
            <person name="Anderson A.J."/>
            <person name="Sims R.C."/>
            <person name="Richardson P."/>
        </authorList>
    </citation>
    <scope>NUCLEOTIDE SEQUENCE [LARGE SCALE GENOMIC DNA]</scope>
    <source>
        <strain>JLS</strain>
    </source>
</reference>
<sequence>MAIVGVGIDLVSIPDFAEQVDRPGTVFAETFTPGERRDAADKSSSAARHLAARWAAKEAVIKAWSGSRFAKRPALPEGIHRDIEVVTDMWGRPKVRLTGDIAEHLREATIHVSLTHEGDTAAAVAVIEEP</sequence>
<name>ACPS_MYCSJ</name>
<dbReference type="EC" id="2.7.8.7" evidence="1"/>
<dbReference type="EMBL" id="CP000580">
    <property type="protein sequence ID" value="ABN99437.1"/>
    <property type="molecule type" value="Genomic_DNA"/>
</dbReference>
<dbReference type="SMR" id="A3Q2R0"/>
<dbReference type="KEGG" id="mjl:Mjls_3660"/>
<dbReference type="HOGENOM" id="CLU_089696_2_0_11"/>
<dbReference type="BioCyc" id="MSP164757:G1G8C-3696-MONOMER"/>
<dbReference type="GO" id="GO:0005737">
    <property type="term" value="C:cytoplasm"/>
    <property type="evidence" value="ECO:0007669"/>
    <property type="project" value="UniProtKB-SubCell"/>
</dbReference>
<dbReference type="GO" id="GO:0008897">
    <property type="term" value="F:holo-[acyl-carrier-protein] synthase activity"/>
    <property type="evidence" value="ECO:0007669"/>
    <property type="project" value="UniProtKB-UniRule"/>
</dbReference>
<dbReference type="GO" id="GO:0000287">
    <property type="term" value="F:magnesium ion binding"/>
    <property type="evidence" value="ECO:0007669"/>
    <property type="project" value="UniProtKB-UniRule"/>
</dbReference>
<dbReference type="GO" id="GO:0006633">
    <property type="term" value="P:fatty acid biosynthetic process"/>
    <property type="evidence" value="ECO:0007669"/>
    <property type="project" value="UniProtKB-UniRule"/>
</dbReference>
<dbReference type="Gene3D" id="3.90.470.20">
    <property type="entry name" value="4'-phosphopantetheinyl transferase domain"/>
    <property type="match status" value="1"/>
</dbReference>
<dbReference type="HAMAP" id="MF_00101">
    <property type="entry name" value="AcpS"/>
    <property type="match status" value="1"/>
</dbReference>
<dbReference type="InterPro" id="IPR008278">
    <property type="entry name" value="4-PPantetheinyl_Trfase_dom"/>
</dbReference>
<dbReference type="InterPro" id="IPR037143">
    <property type="entry name" value="4-PPantetheinyl_Trfase_dom_sf"/>
</dbReference>
<dbReference type="InterPro" id="IPR002582">
    <property type="entry name" value="ACPS"/>
</dbReference>
<dbReference type="InterPro" id="IPR004568">
    <property type="entry name" value="Ppantetheine-prot_Trfase_dom"/>
</dbReference>
<dbReference type="NCBIfam" id="TIGR00516">
    <property type="entry name" value="acpS"/>
    <property type="match status" value="1"/>
</dbReference>
<dbReference type="NCBIfam" id="TIGR00556">
    <property type="entry name" value="pantethn_trn"/>
    <property type="match status" value="1"/>
</dbReference>
<dbReference type="NCBIfam" id="NF000831">
    <property type="entry name" value="PRK00070.3-1"/>
    <property type="match status" value="1"/>
</dbReference>
<dbReference type="Pfam" id="PF01648">
    <property type="entry name" value="ACPS"/>
    <property type="match status" value="1"/>
</dbReference>
<dbReference type="SUPFAM" id="SSF56214">
    <property type="entry name" value="4'-phosphopantetheinyl transferase"/>
    <property type="match status" value="1"/>
</dbReference>
<proteinExistence type="inferred from homology"/>
<organism>
    <name type="scientific">Mycobacterium sp. (strain JLS)</name>
    <dbReference type="NCBI Taxonomy" id="164757"/>
    <lineage>
        <taxon>Bacteria</taxon>
        <taxon>Bacillati</taxon>
        <taxon>Actinomycetota</taxon>
        <taxon>Actinomycetes</taxon>
        <taxon>Mycobacteriales</taxon>
        <taxon>Mycobacteriaceae</taxon>
        <taxon>Mycobacterium</taxon>
    </lineage>
</organism>
<accession>A3Q2R0</accession>
<feature type="chain" id="PRO_1000008455" description="Holo-[acyl-carrier-protein] synthase">
    <location>
        <begin position="1"/>
        <end position="130"/>
    </location>
</feature>
<feature type="binding site" evidence="1">
    <location>
        <position position="9"/>
    </location>
    <ligand>
        <name>Mg(2+)</name>
        <dbReference type="ChEBI" id="CHEBI:18420"/>
    </ligand>
</feature>
<feature type="binding site" evidence="1">
    <location>
        <position position="58"/>
    </location>
    <ligand>
        <name>Mg(2+)</name>
        <dbReference type="ChEBI" id="CHEBI:18420"/>
    </ligand>
</feature>
<keyword id="KW-0963">Cytoplasm</keyword>
<keyword id="KW-0275">Fatty acid biosynthesis</keyword>
<keyword id="KW-0276">Fatty acid metabolism</keyword>
<keyword id="KW-0444">Lipid biosynthesis</keyword>
<keyword id="KW-0443">Lipid metabolism</keyword>
<keyword id="KW-0460">Magnesium</keyword>
<keyword id="KW-0479">Metal-binding</keyword>
<keyword id="KW-0808">Transferase</keyword>
<evidence type="ECO:0000255" key="1">
    <source>
        <dbReference type="HAMAP-Rule" id="MF_00101"/>
    </source>
</evidence>
<gene>
    <name evidence="1" type="primary">acpS</name>
    <name type="ordered locus">Mjls_3660</name>
</gene>